<proteinExistence type="inferred from homology"/>
<sequence>MSAAEIDEGVFETTATIDNGSFGTRTIRFETGRLALQAAGAVVAYLDDDNMLLSATTASKNPKEHFDFFPLTVDVEERMYAAGRIPGSFFRREGRPSTDAILTCRLIDRPLRPSFVDGLRNEIQIVVTILSLDPGDLYDVLAINAASASTQLGGLPFSGPIGGVRVALIDGTWVGFPTVDQIERAVFDMVVAGRIVEGDVAIMMVEAEATENVVELVEGGAQAPTESVVAAGLEAAKPFIAALCTAQQELADAAGKSGKPTVDFPVFPDYGEDVYYSVSSVATDELAAALTIGGKAERDQRIDEIKTQVVQRLADTYEGREKEVGAALRALTKKLVRQRILTDHFRIDGRGITDIRALSAEVAVVPRAHGSALFERGETQILGVTTLDMIKMAQQIDSLGPETSKRYMHHYNFPPFSTGETGRVGSPKRREIGHGALAERALVPVLPSVEEFPYAIRQVSEALGSNGSTSMGSVCASTLALLNAGVPLKAPVAGIAMGLVSDDIQVEGAVDGVVERRFVTLTDILGAEDAFGDMDFKVAGTKDFVTALQLDTKLDGIPSQVLAGALEQAKDARLTILEVMAEAIDRPDEMSPYAPRVTTIKVPVDKIGEVIGPKGKVINAITEETGAQISIEDDGTVFVGATDGPSAQAAIDKINAIANPQLPTVGERFLGTVVKTTDFGAFVSLLPGRDGLVHISKLGKGKRIAKVEDVVNVGDKLRVEIADIDKRGKISLILVADEDSTAAATDAATVTS</sequence>
<evidence type="ECO:0000255" key="1">
    <source>
        <dbReference type="HAMAP-Rule" id="MF_01595"/>
    </source>
</evidence>
<accession>A5U6D6</accession>
<feature type="chain" id="PRO_0000329725" description="Polyribonucleotide nucleotidyltransferase">
    <location>
        <begin position="1"/>
        <end position="752"/>
    </location>
</feature>
<feature type="domain" description="KH" evidence="1">
    <location>
        <begin position="595"/>
        <end position="654"/>
    </location>
</feature>
<feature type="domain" description="S1 motif" evidence="1">
    <location>
        <begin position="666"/>
        <end position="735"/>
    </location>
</feature>
<feature type="binding site" evidence="1">
    <location>
        <position position="529"/>
    </location>
    <ligand>
        <name>Mg(2+)</name>
        <dbReference type="ChEBI" id="CHEBI:18420"/>
    </ligand>
</feature>
<feature type="binding site" evidence="1">
    <location>
        <position position="535"/>
    </location>
    <ligand>
        <name>Mg(2+)</name>
        <dbReference type="ChEBI" id="CHEBI:18420"/>
    </ligand>
</feature>
<reference key="1">
    <citation type="journal article" date="2008" name="PLoS ONE">
        <title>Genetic basis of virulence attenuation revealed by comparative genomic analysis of Mycobacterium tuberculosis strain H37Ra versus H37Rv.</title>
        <authorList>
            <person name="Zheng H."/>
            <person name="Lu L."/>
            <person name="Wang B."/>
            <person name="Pu S."/>
            <person name="Zhang X."/>
            <person name="Zhu G."/>
            <person name="Shi W."/>
            <person name="Zhang L."/>
            <person name="Wang H."/>
            <person name="Wang S."/>
            <person name="Zhao G."/>
            <person name="Zhang Y."/>
        </authorList>
    </citation>
    <scope>NUCLEOTIDE SEQUENCE [LARGE SCALE GENOMIC DNA]</scope>
    <source>
        <strain>ATCC 25177 / H37Ra</strain>
    </source>
</reference>
<dbReference type="EC" id="2.7.7.8" evidence="1"/>
<dbReference type="EMBL" id="CP000611">
    <property type="protein sequence ID" value="ABQ74586.1"/>
    <property type="molecule type" value="Genomic_DNA"/>
</dbReference>
<dbReference type="RefSeq" id="WP_003414124.1">
    <property type="nucleotide sequence ID" value="NZ_CP016972.1"/>
</dbReference>
<dbReference type="SMR" id="A5U6D6"/>
<dbReference type="KEGG" id="mra:MRA_2807"/>
<dbReference type="eggNOG" id="COG1185">
    <property type="taxonomic scope" value="Bacteria"/>
</dbReference>
<dbReference type="HOGENOM" id="CLU_004217_2_2_11"/>
<dbReference type="Proteomes" id="UP000001988">
    <property type="component" value="Chromosome"/>
</dbReference>
<dbReference type="GO" id="GO:0005829">
    <property type="term" value="C:cytosol"/>
    <property type="evidence" value="ECO:0007669"/>
    <property type="project" value="TreeGrafter"/>
</dbReference>
<dbReference type="GO" id="GO:0000175">
    <property type="term" value="F:3'-5'-RNA exonuclease activity"/>
    <property type="evidence" value="ECO:0007669"/>
    <property type="project" value="TreeGrafter"/>
</dbReference>
<dbReference type="GO" id="GO:0000287">
    <property type="term" value="F:magnesium ion binding"/>
    <property type="evidence" value="ECO:0007669"/>
    <property type="project" value="UniProtKB-UniRule"/>
</dbReference>
<dbReference type="GO" id="GO:0004654">
    <property type="term" value="F:polyribonucleotide nucleotidyltransferase activity"/>
    <property type="evidence" value="ECO:0007669"/>
    <property type="project" value="UniProtKB-UniRule"/>
</dbReference>
<dbReference type="GO" id="GO:0003723">
    <property type="term" value="F:RNA binding"/>
    <property type="evidence" value="ECO:0007669"/>
    <property type="project" value="UniProtKB-UniRule"/>
</dbReference>
<dbReference type="GO" id="GO:0006402">
    <property type="term" value="P:mRNA catabolic process"/>
    <property type="evidence" value="ECO:0007669"/>
    <property type="project" value="UniProtKB-UniRule"/>
</dbReference>
<dbReference type="GO" id="GO:0006396">
    <property type="term" value="P:RNA processing"/>
    <property type="evidence" value="ECO:0007669"/>
    <property type="project" value="InterPro"/>
</dbReference>
<dbReference type="CDD" id="cd02393">
    <property type="entry name" value="KH-I_PNPase"/>
    <property type="match status" value="1"/>
</dbReference>
<dbReference type="CDD" id="cd11364">
    <property type="entry name" value="RNase_PH_PNPase_2"/>
    <property type="match status" value="1"/>
</dbReference>
<dbReference type="CDD" id="cd04472">
    <property type="entry name" value="S1_PNPase"/>
    <property type="match status" value="1"/>
</dbReference>
<dbReference type="FunFam" id="2.40.50.140:FF:000069">
    <property type="entry name" value="Polyribonucleotide nucleotidyltransferase"/>
    <property type="match status" value="1"/>
</dbReference>
<dbReference type="FunFam" id="3.30.1370.10:FF:000001">
    <property type="entry name" value="Polyribonucleotide nucleotidyltransferase"/>
    <property type="match status" value="1"/>
</dbReference>
<dbReference type="FunFam" id="3.30.230.70:FF:000001">
    <property type="entry name" value="Polyribonucleotide nucleotidyltransferase"/>
    <property type="match status" value="1"/>
</dbReference>
<dbReference type="FunFam" id="3.30.230.70:FF:000002">
    <property type="entry name" value="Polyribonucleotide nucleotidyltransferase"/>
    <property type="match status" value="1"/>
</dbReference>
<dbReference type="Gene3D" id="3.30.230.70">
    <property type="entry name" value="GHMP Kinase, N-terminal domain"/>
    <property type="match status" value="2"/>
</dbReference>
<dbReference type="Gene3D" id="3.30.1370.10">
    <property type="entry name" value="K Homology domain, type 1"/>
    <property type="match status" value="1"/>
</dbReference>
<dbReference type="Gene3D" id="2.40.50.140">
    <property type="entry name" value="Nucleic acid-binding proteins"/>
    <property type="match status" value="1"/>
</dbReference>
<dbReference type="HAMAP" id="MF_01595">
    <property type="entry name" value="PNPase"/>
    <property type="match status" value="1"/>
</dbReference>
<dbReference type="InterPro" id="IPR001247">
    <property type="entry name" value="ExoRNase_PH_dom1"/>
</dbReference>
<dbReference type="InterPro" id="IPR036345">
    <property type="entry name" value="ExoRNase_PH_dom2_sf"/>
</dbReference>
<dbReference type="InterPro" id="IPR014069">
    <property type="entry name" value="GPSI/PNP"/>
</dbReference>
<dbReference type="InterPro" id="IPR004087">
    <property type="entry name" value="KH_dom"/>
</dbReference>
<dbReference type="InterPro" id="IPR004088">
    <property type="entry name" value="KH_dom_type_1"/>
</dbReference>
<dbReference type="InterPro" id="IPR036612">
    <property type="entry name" value="KH_dom_type_1_sf"/>
</dbReference>
<dbReference type="InterPro" id="IPR012340">
    <property type="entry name" value="NA-bd_OB-fold"/>
</dbReference>
<dbReference type="InterPro" id="IPR012162">
    <property type="entry name" value="PNPase"/>
</dbReference>
<dbReference type="InterPro" id="IPR027408">
    <property type="entry name" value="PNPase/RNase_PH_dom_sf"/>
</dbReference>
<dbReference type="InterPro" id="IPR015848">
    <property type="entry name" value="PNPase_PH_RNA-bd_bac/org-type"/>
</dbReference>
<dbReference type="InterPro" id="IPR036456">
    <property type="entry name" value="PNPase_PH_RNA-bd_sf"/>
</dbReference>
<dbReference type="InterPro" id="IPR020568">
    <property type="entry name" value="Ribosomal_Su5_D2-typ_SF"/>
</dbReference>
<dbReference type="InterPro" id="IPR003029">
    <property type="entry name" value="S1_domain"/>
</dbReference>
<dbReference type="NCBIfam" id="TIGR03591">
    <property type="entry name" value="polynuc_phos"/>
    <property type="match status" value="1"/>
</dbReference>
<dbReference type="NCBIfam" id="TIGR02696">
    <property type="entry name" value="pppGpp_PNP"/>
    <property type="match status" value="1"/>
</dbReference>
<dbReference type="NCBIfam" id="NF008805">
    <property type="entry name" value="PRK11824.1"/>
    <property type="match status" value="1"/>
</dbReference>
<dbReference type="PANTHER" id="PTHR11252">
    <property type="entry name" value="POLYRIBONUCLEOTIDE NUCLEOTIDYLTRANSFERASE"/>
    <property type="match status" value="1"/>
</dbReference>
<dbReference type="PANTHER" id="PTHR11252:SF0">
    <property type="entry name" value="POLYRIBONUCLEOTIDE NUCLEOTIDYLTRANSFERASE 1, MITOCHONDRIAL"/>
    <property type="match status" value="1"/>
</dbReference>
<dbReference type="Pfam" id="PF00013">
    <property type="entry name" value="KH_1"/>
    <property type="match status" value="1"/>
</dbReference>
<dbReference type="Pfam" id="PF03726">
    <property type="entry name" value="PNPase"/>
    <property type="match status" value="1"/>
</dbReference>
<dbReference type="Pfam" id="PF01138">
    <property type="entry name" value="RNase_PH"/>
    <property type="match status" value="2"/>
</dbReference>
<dbReference type="Pfam" id="PF00575">
    <property type="entry name" value="S1"/>
    <property type="match status" value="1"/>
</dbReference>
<dbReference type="PIRSF" id="PIRSF005499">
    <property type="entry name" value="PNPase"/>
    <property type="match status" value="1"/>
</dbReference>
<dbReference type="SMART" id="SM00322">
    <property type="entry name" value="KH"/>
    <property type="match status" value="1"/>
</dbReference>
<dbReference type="SMART" id="SM00316">
    <property type="entry name" value="S1"/>
    <property type="match status" value="1"/>
</dbReference>
<dbReference type="SUPFAM" id="SSF54791">
    <property type="entry name" value="Eukaryotic type KH-domain (KH-domain type I)"/>
    <property type="match status" value="1"/>
</dbReference>
<dbReference type="SUPFAM" id="SSF50249">
    <property type="entry name" value="Nucleic acid-binding proteins"/>
    <property type="match status" value="1"/>
</dbReference>
<dbReference type="SUPFAM" id="SSF46915">
    <property type="entry name" value="Polynucleotide phosphorylase/guanosine pentaphosphate synthase (PNPase/GPSI), domain 3"/>
    <property type="match status" value="1"/>
</dbReference>
<dbReference type="SUPFAM" id="SSF55666">
    <property type="entry name" value="Ribonuclease PH domain 2-like"/>
    <property type="match status" value="2"/>
</dbReference>
<dbReference type="SUPFAM" id="SSF54211">
    <property type="entry name" value="Ribosomal protein S5 domain 2-like"/>
    <property type="match status" value="2"/>
</dbReference>
<dbReference type="PROSITE" id="PS50084">
    <property type="entry name" value="KH_TYPE_1"/>
    <property type="match status" value="1"/>
</dbReference>
<dbReference type="PROSITE" id="PS50126">
    <property type="entry name" value="S1"/>
    <property type="match status" value="1"/>
</dbReference>
<keyword id="KW-0963">Cytoplasm</keyword>
<keyword id="KW-0460">Magnesium</keyword>
<keyword id="KW-0479">Metal-binding</keyword>
<keyword id="KW-0548">Nucleotidyltransferase</keyword>
<keyword id="KW-1185">Reference proteome</keyword>
<keyword id="KW-0694">RNA-binding</keyword>
<keyword id="KW-0808">Transferase</keyword>
<protein>
    <recommendedName>
        <fullName evidence="1">Polyribonucleotide nucleotidyltransferase</fullName>
        <ecNumber evidence="1">2.7.7.8</ecNumber>
    </recommendedName>
    <alternativeName>
        <fullName evidence="1">Polynucleotide phosphorylase</fullName>
        <shortName evidence="1">PNPase</shortName>
    </alternativeName>
</protein>
<organism>
    <name type="scientific">Mycobacterium tuberculosis (strain ATCC 25177 / H37Ra)</name>
    <dbReference type="NCBI Taxonomy" id="419947"/>
    <lineage>
        <taxon>Bacteria</taxon>
        <taxon>Bacillati</taxon>
        <taxon>Actinomycetota</taxon>
        <taxon>Actinomycetes</taxon>
        <taxon>Mycobacteriales</taxon>
        <taxon>Mycobacteriaceae</taxon>
        <taxon>Mycobacterium</taxon>
        <taxon>Mycobacterium tuberculosis complex</taxon>
    </lineage>
</organism>
<gene>
    <name evidence="1" type="primary">pnp</name>
    <name type="ordered locus">MRA_2807</name>
</gene>
<comment type="function">
    <text evidence="1">Involved in mRNA degradation. Catalyzes the phosphorolysis of single-stranded polyribonucleotides processively in the 3'- to 5'-direction.</text>
</comment>
<comment type="catalytic activity">
    <reaction evidence="1">
        <text>RNA(n+1) + phosphate = RNA(n) + a ribonucleoside 5'-diphosphate</text>
        <dbReference type="Rhea" id="RHEA:22096"/>
        <dbReference type="Rhea" id="RHEA-COMP:14527"/>
        <dbReference type="Rhea" id="RHEA-COMP:17342"/>
        <dbReference type="ChEBI" id="CHEBI:43474"/>
        <dbReference type="ChEBI" id="CHEBI:57930"/>
        <dbReference type="ChEBI" id="CHEBI:140395"/>
        <dbReference type="EC" id="2.7.7.8"/>
    </reaction>
</comment>
<comment type="cofactor">
    <cofactor evidence="1">
        <name>Mg(2+)</name>
        <dbReference type="ChEBI" id="CHEBI:18420"/>
    </cofactor>
</comment>
<comment type="subcellular location">
    <subcellularLocation>
        <location evidence="1">Cytoplasm</location>
    </subcellularLocation>
</comment>
<comment type="similarity">
    <text evidence="1">Belongs to the polyribonucleotide nucleotidyltransferase family.</text>
</comment>
<name>PNP_MYCTA</name>